<reference key="1">
    <citation type="submission" date="2007-03" db="EMBL/GenBank/DDBJ databases">
        <title>Sequencing analysis of Arabis hirsuta chloroplast DNA.</title>
        <authorList>
            <person name="Hosouchi T."/>
            <person name="Tsuruoka H."/>
            <person name="Kotani H."/>
        </authorList>
    </citation>
    <scope>NUCLEOTIDE SEQUENCE [LARGE SCALE GENOMIC DNA]</scope>
</reference>
<geneLocation type="chloroplast"/>
<sequence>MIEVSLFGIVLGLIPITLAGLFVTAYLQYRRGDQLDF</sequence>
<accession>A4QK37</accession>
<comment type="function">
    <text evidence="1">Component of the cytochrome b6-f complex, which mediates electron transfer between photosystem II (PSII) and photosystem I (PSI), cyclic electron flow around PSI, and state transitions. PetG is required for either the stability or assembly of the cytochrome b6-f complex.</text>
</comment>
<comment type="subunit">
    <text evidence="1">The 4 large subunits of the cytochrome b6-f complex are cytochrome b6, subunit IV (17 kDa polypeptide, PetD), cytochrome f and the Rieske protein, while the 4 small subunits are PetG, PetL, PetM and PetN. The complex functions as a dimer.</text>
</comment>
<comment type="subcellular location">
    <subcellularLocation>
        <location evidence="1">Plastid</location>
        <location evidence="1">Chloroplast thylakoid membrane</location>
        <topology evidence="1">Single-pass membrane protein</topology>
    </subcellularLocation>
</comment>
<comment type="similarity">
    <text evidence="1">Belongs to the PetG family.</text>
</comment>
<name>PETG_ARAHI</name>
<keyword id="KW-0150">Chloroplast</keyword>
<keyword id="KW-0249">Electron transport</keyword>
<keyword id="KW-0472">Membrane</keyword>
<keyword id="KW-0602">Photosynthesis</keyword>
<keyword id="KW-0934">Plastid</keyword>
<keyword id="KW-0793">Thylakoid</keyword>
<keyword id="KW-0812">Transmembrane</keyword>
<keyword id="KW-1133">Transmembrane helix</keyword>
<keyword id="KW-0813">Transport</keyword>
<protein>
    <recommendedName>
        <fullName evidence="1">Cytochrome b6-f complex subunit 5</fullName>
    </recommendedName>
    <alternativeName>
        <fullName evidence="1">Cytochrome b6-f complex subunit PetG</fullName>
    </alternativeName>
    <alternativeName>
        <fullName evidence="1">Cytochrome b6-f complex subunit V</fullName>
    </alternativeName>
</protein>
<gene>
    <name evidence="1" type="primary">petG</name>
</gene>
<proteinExistence type="inferred from homology"/>
<feature type="chain" id="PRO_0000355369" description="Cytochrome b6-f complex subunit 5">
    <location>
        <begin position="1"/>
        <end position="37"/>
    </location>
</feature>
<feature type="transmembrane region" description="Helical" evidence="1">
    <location>
        <begin position="5"/>
        <end position="25"/>
    </location>
</feature>
<dbReference type="EMBL" id="AP009369">
    <property type="protein sequence ID" value="BAF50042.1"/>
    <property type="molecule type" value="Genomic_DNA"/>
</dbReference>
<dbReference type="RefSeq" id="YP_001123218.1">
    <property type="nucleotide sequence ID" value="NC_009268.1"/>
</dbReference>
<dbReference type="SMR" id="A4QK37"/>
<dbReference type="GeneID" id="4962558"/>
<dbReference type="GO" id="GO:0009535">
    <property type="term" value="C:chloroplast thylakoid membrane"/>
    <property type="evidence" value="ECO:0007669"/>
    <property type="project" value="UniProtKB-SubCell"/>
</dbReference>
<dbReference type="GO" id="GO:0009512">
    <property type="term" value="C:cytochrome b6f complex"/>
    <property type="evidence" value="ECO:0007669"/>
    <property type="project" value="InterPro"/>
</dbReference>
<dbReference type="GO" id="GO:0045158">
    <property type="term" value="F:electron transporter, transferring electrons within cytochrome b6/f complex of photosystem II activity"/>
    <property type="evidence" value="ECO:0007669"/>
    <property type="project" value="UniProtKB-UniRule"/>
</dbReference>
<dbReference type="GO" id="GO:0017004">
    <property type="term" value="P:cytochrome complex assembly"/>
    <property type="evidence" value="ECO:0007669"/>
    <property type="project" value="UniProtKB-UniRule"/>
</dbReference>
<dbReference type="GO" id="GO:0015979">
    <property type="term" value="P:photosynthesis"/>
    <property type="evidence" value="ECO:0007669"/>
    <property type="project" value="UniProtKB-KW"/>
</dbReference>
<dbReference type="HAMAP" id="MF_00432">
    <property type="entry name" value="Cytb6_f_PetG"/>
    <property type="match status" value="1"/>
</dbReference>
<dbReference type="InterPro" id="IPR003683">
    <property type="entry name" value="Cyt_6/f_cplx_su5"/>
</dbReference>
<dbReference type="InterPro" id="IPR036099">
    <property type="entry name" value="Cyt_6/f_cplx_su5_sf"/>
</dbReference>
<dbReference type="NCBIfam" id="NF001907">
    <property type="entry name" value="PRK00665.1"/>
    <property type="match status" value="1"/>
</dbReference>
<dbReference type="Pfam" id="PF02529">
    <property type="entry name" value="PetG"/>
    <property type="match status" value="1"/>
</dbReference>
<dbReference type="PIRSF" id="PIRSF000034">
    <property type="entry name" value="Cyt_b6-f_V"/>
    <property type="match status" value="1"/>
</dbReference>
<dbReference type="SUPFAM" id="SSF103446">
    <property type="entry name" value="PetG subunit of the cytochrome b6f complex"/>
    <property type="match status" value="1"/>
</dbReference>
<organism>
    <name type="scientific">Arabis hirsuta</name>
    <name type="common">Hairy rock-cress</name>
    <name type="synonym">Turritis hirsuta</name>
    <dbReference type="NCBI Taxonomy" id="78191"/>
    <lineage>
        <taxon>Eukaryota</taxon>
        <taxon>Viridiplantae</taxon>
        <taxon>Streptophyta</taxon>
        <taxon>Embryophyta</taxon>
        <taxon>Tracheophyta</taxon>
        <taxon>Spermatophyta</taxon>
        <taxon>Magnoliopsida</taxon>
        <taxon>eudicotyledons</taxon>
        <taxon>Gunneridae</taxon>
        <taxon>Pentapetalae</taxon>
        <taxon>rosids</taxon>
        <taxon>malvids</taxon>
        <taxon>Brassicales</taxon>
        <taxon>Brassicaceae</taxon>
        <taxon>Arabideae</taxon>
        <taxon>Arabis</taxon>
    </lineage>
</organism>
<evidence type="ECO:0000255" key="1">
    <source>
        <dbReference type="HAMAP-Rule" id="MF_00432"/>
    </source>
</evidence>